<reference key="1">
    <citation type="journal article" date="1998" name="Nature">
        <title>Deciphering the biology of Mycobacterium tuberculosis from the complete genome sequence.</title>
        <authorList>
            <person name="Cole S.T."/>
            <person name="Brosch R."/>
            <person name="Parkhill J."/>
            <person name="Garnier T."/>
            <person name="Churcher C.M."/>
            <person name="Harris D.E."/>
            <person name="Gordon S.V."/>
            <person name="Eiglmeier K."/>
            <person name="Gas S."/>
            <person name="Barry C.E. III"/>
            <person name="Tekaia F."/>
            <person name="Badcock K."/>
            <person name="Basham D."/>
            <person name="Brown D."/>
            <person name="Chillingworth T."/>
            <person name="Connor R."/>
            <person name="Davies R.M."/>
            <person name="Devlin K."/>
            <person name="Feltwell T."/>
            <person name="Gentles S."/>
            <person name="Hamlin N."/>
            <person name="Holroyd S."/>
            <person name="Hornsby T."/>
            <person name="Jagels K."/>
            <person name="Krogh A."/>
            <person name="McLean J."/>
            <person name="Moule S."/>
            <person name="Murphy L.D."/>
            <person name="Oliver S."/>
            <person name="Osborne J."/>
            <person name="Quail M.A."/>
            <person name="Rajandream M.A."/>
            <person name="Rogers J."/>
            <person name="Rutter S."/>
            <person name="Seeger K."/>
            <person name="Skelton S."/>
            <person name="Squares S."/>
            <person name="Squares R."/>
            <person name="Sulston J.E."/>
            <person name="Taylor K."/>
            <person name="Whitehead S."/>
            <person name="Barrell B.G."/>
        </authorList>
    </citation>
    <scope>NUCLEOTIDE SEQUENCE [LARGE SCALE GENOMIC DNA]</scope>
    <source>
        <strain>ATCC 25618 / H37Rv</strain>
    </source>
</reference>
<reference key="2">
    <citation type="journal article" date="2011" name="Mol. Cell. Proteomics">
        <title>Proteogenomic analysis of Mycobacterium tuberculosis by high resolution mass spectrometry.</title>
        <authorList>
            <person name="Kelkar D.S."/>
            <person name="Kumar D."/>
            <person name="Kumar P."/>
            <person name="Balakrishnan L."/>
            <person name="Muthusamy B."/>
            <person name="Yadav A.K."/>
            <person name="Shrivastava P."/>
            <person name="Marimuthu A."/>
            <person name="Anand S."/>
            <person name="Sundaram H."/>
            <person name="Kingsbury R."/>
            <person name="Harsha H.C."/>
            <person name="Nair B."/>
            <person name="Prasad T.S."/>
            <person name="Chauhan D.S."/>
            <person name="Katoch K."/>
            <person name="Katoch V.M."/>
            <person name="Kumar P."/>
            <person name="Chaerkady R."/>
            <person name="Ramachandran S."/>
            <person name="Dash D."/>
            <person name="Pandey A."/>
        </authorList>
    </citation>
    <scope>IDENTIFICATION BY MASS SPECTROMETRY [LARGE SCALE ANALYSIS]</scope>
    <source>
        <strain>ATCC 25618 / H37Rv</strain>
    </source>
</reference>
<reference key="3">
    <citation type="journal article" date="2012" name="PLoS ONE">
        <title>The Mycobacterium tuberculosis PE proteins Rv0285 and Rv1386 modulate innate immunity and mediate bacillary survival in macrophages.</title>
        <authorList>
            <person name="Tiwari B.M."/>
            <person name="Kannan N."/>
            <person name="Vemu L."/>
            <person name="Raghunand T.R."/>
        </authorList>
    </citation>
    <scope>FUNCTION</scope>
    <scope>SUBCELLULAR LOCATION</scope>
</reference>
<reference key="4">
    <citation type="journal article" date="2016" name="Proc. Natl. Acad. Sci. U.S.A.">
        <title>Separable roles for Mycobacterium tuberculosis ESX-3 effectors in iron acquisition and virulence.</title>
        <authorList>
            <person name="Tufariello J.M."/>
            <person name="Chapman J.R."/>
            <person name="Kerantzas C.A."/>
            <person name="Wong K.W."/>
            <person name="Vilcheze C."/>
            <person name="Jones C.M."/>
            <person name="Cole L.E."/>
            <person name="Tinaztepe E."/>
            <person name="Thompson V."/>
            <person name="Fenyoe D."/>
            <person name="Niederweis M."/>
            <person name="Ueberheide B."/>
            <person name="Philips J.A."/>
            <person name="Jacobs W.R. Jr."/>
        </authorList>
    </citation>
    <scope>SUBCELLULAR LOCATION</scope>
</reference>
<organism>
    <name type="scientific">Mycobacterium tuberculosis (strain ATCC 25618 / H37Rv)</name>
    <dbReference type="NCBI Taxonomy" id="83332"/>
    <lineage>
        <taxon>Bacteria</taxon>
        <taxon>Bacillati</taxon>
        <taxon>Actinomycetota</taxon>
        <taxon>Actinomycetes</taxon>
        <taxon>Mycobacteriales</taxon>
        <taxon>Mycobacteriaceae</taxon>
        <taxon>Mycobacterium</taxon>
        <taxon>Mycobacterium tuberculosis complex</taxon>
    </lineage>
</organism>
<gene>
    <name evidence="4" type="primary">PE15</name>
    <name type="ordered locus">Rv1386</name>
    <name type="ORF">MTCY21B4.03</name>
</gene>
<dbReference type="EMBL" id="AL123456">
    <property type="protein sequence ID" value="CCP44145.1"/>
    <property type="molecule type" value="Genomic_DNA"/>
</dbReference>
<dbReference type="PIR" id="H70898">
    <property type="entry name" value="H70898"/>
</dbReference>
<dbReference type="RefSeq" id="WP_003407225.1">
    <property type="nucleotide sequence ID" value="NZ_NVQJ01000050.1"/>
</dbReference>
<dbReference type="RefSeq" id="YP_177805.1">
    <property type="nucleotide sequence ID" value="NC_000962.3"/>
</dbReference>
<dbReference type="SMR" id="P9WIH1"/>
<dbReference type="STRING" id="83332.Rv1386"/>
<dbReference type="PaxDb" id="83332-Rv1386"/>
<dbReference type="GeneID" id="886757"/>
<dbReference type="KEGG" id="mtu:Rv1386"/>
<dbReference type="KEGG" id="mtv:RVBD_1386"/>
<dbReference type="TubercuList" id="Rv1386"/>
<dbReference type="eggNOG" id="ENOG503235C">
    <property type="taxonomic scope" value="Bacteria"/>
</dbReference>
<dbReference type="InParanoid" id="P9WIH1"/>
<dbReference type="OrthoDB" id="4753018at2"/>
<dbReference type="PhylomeDB" id="P9WIH1"/>
<dbReference type="Proteomes" id="UP000001584">
    <property type="component" value="Chromosome"/>
</dbReference>
<dbReference type="GO" id="GO:0030313">
    <property type="term" value="C:cell envelope"/>
    <property type="evidence" value="ECO:0007669"/>
    <property type="project" value="UniProtKB-SubCell"/>
</dbReference>
<dbReference type="GO" id="GO:0009986">
    <property type="term" value="C:cell surface"/>
    <property type="evidence" value="ECO:0007669"/>
    <property type="project" value="UniProtKB-SubCell"/>
</dbReference>
<dbReference type="GO" id="GO:0005576">
    <property type="term" value="C:extracellular region"/>
    <property type="evidence" value="ECO:0007005"/>
    <property type="project" value="MTBBASE"/>
</dbReference>
<dbReference type="FunFam" id="1.10.287.850:FF:000002">
    <property type="entry name" value="PE family immunomodulator PE15"/>
    <property type="match status" value="1"/>
</dbReference>
<dbReference type="Gene3D" id="1.10.287.850">
    <property type="entry name" value="HP0062-like domain"/>
    <property type="match status" value="1"/>
</dbReference>
<dbReference type="InterPro" id="IPR000084">
    <property type="entry name" value="PE-PGRS_N"/>
</dbReference>
<dbReference type="Pfam" id="PF00934">
    <property type="entry name" value="PE"/>
    <property type="match status" value="1"/>
</dbReference>
<dbReference type="SUPFAM" id="SSF140459">
    <property type="entry name" value="PE/PPE dimer-like"/>
    <property type="match status" value="1"/>
</dbReference>
<keyword id="KW-1185">Reference proteome</keyword>
<keyword id="KW-0964">Secreted</keyword>
<keyword id="KW-0843">Virulence</keyword>
<proteinExistence type="evidence at protein level"/>
<sequence length="102" mass="9862">MTLRVVPESLAGASAAIEAVTARLAAAHAAAAPFIAAVIPPGSDSVSVCNAVEFSVHGSQHVAMAAQGVEELGRSGVGVAESGASYAARDALAAASYLSGGL</sequence>
<feature type="chain" id="PRO_0000023572" description="PE family immunomodulator PE15">
    <location>
        <begin position="1"/>
        <end position="102"/>
    </location>
</feature>
<feature type="domain" description="PE" evidence="1">
    <location>
        <begin position="3"/>
        <end position="91"/>
    </location>
</feature>
<comment type="function">
    <text evidence="2">May play a pivotal role in the evasion of host immune response by M.tuberculosis. Mediates production of IL-10 via activation of the p38 and ERK1/2 mitogen-activated protein kinase (MAPK) signaling pathways.</text>
</comment>
<comment type="subcellular location">
    <subcellularLocation>
        <location evidence="3">Secreted</location>
    </subcellularLocation>
    <subcellularLocation>
        <location evidence="2">Cell envelope</location>
    </subcellularLocation>
    <subcellularLocation>
        <location evidence="2">Cell surface</location>
    </subcellularLocation>
    <text evidence="3">Secreted via the ESX-3 / type VII secretion system (T7SS) (PubMed:26729876). Secretion is dependent on EsxG and EsxH (PubMed:26729876).</text>
</comment>
<comment type="similarity">
    <text evidence="5">Belongs to the mycobacterial PE family.</text>
</comment>
<protein>
    <recommendedName>
        <fullName evidence="5">PE family immunomodulator PE15</fullName>
    </recommendedName>
</protein>
<evidence type="ECO:0000255" key="1"/>
<evidence type="ECO:0000269" key="2">
    <source>
    </source>
</evidence>
<evidence type="ECO:0000269" key="3">
    <source>
    </source>
</evidence>
<evidence type="ECO:0000303" key="4">
    <source>
    </source>
</evidence>
<evidence type="ECO:0000305" key="5"/>
<name>PE15_MYCTU</name>
<accession>P9WIH1</accession>
<accession>L0T842</accession>
<accession>P0A682</accession>
<accession>P71656</accession>